<accession>Q2A2N7</accession>
<comment type="function">
    <text evidence="1">The RecF protein is involved in DNA metabolism; it is required for DNA replication and normal SOS inducibility. RecF binds preferentially to single-stranded, linear DNA. It also seems to bind ATP.</text>
</comment>
<comment type="subcellular location">
    <subcellularLocation>
        <location evidence="1">Cytoplasm</location>
    </subcellularLocation>
</comment>
<comment type="similarity">
    <text evidence="1">Belongs to the RecF family.</text>
</comment>
<feature type="chain" id="PRO_1000205488" description="DNA replication and repair protein RecF">
    <location>
        <begin position="1"/>
        <end position="349"/>
    </location>
</feature>
<feature type="binding site" evidence="1">
    <location>
        <begin position="30"/>
        <end position="37"/>
    </location>
    <ligand>
        <name>ATP</name>
        <dbReference type="ChEBI" id="CHEBI:30616"/>
    </ligand>
</feature>
<name>RECF_FRATH</name>
<proteinExistence type="inferred from homology"/>
<evidence type="ECO:0000255" key="1">
    <source>
        <dbReference type="HAMAP-Rule" id="MF_00365"/>
    </source>
</evidence>
<dbReference type="EMBL" id="AM233362">
    <property type="protein sequence ID" value="CAJ79791.1"/>
    <property type="molecule type" value="Genomic_DNA"/>
</dbReference>
<dbReference type="RefSeq" id="WP_003016570.1">
    <property type="nucleotide sequence ID" value="NZ_CP009694.1"/>
</dbReference>
<dbReference type="SMR" id="Q2A2N7"/>
<dbReference type="KEGG" id="ftl:FTL_1352"/>
<dbReference type="Proteomes" id="UP000001944">
    <property type="component" value="Chromosome"/>
</dbReference>
<dbReference type="GO" id="GO:0005737">
    <property type="term" value="C:cytoplasm"/>
    <property type="evidence" value="ECO:0007669"/>
    <property type="project" value="UniProtKB-SubCell"/>
</dbReference>
<dbReference type="GO" id="GO:0005524">
    <property type="term" value="F:ATP binding"/>
    <property type="evidence" value="ECO:0007669"/>
    <property type="project" value="UniProtKB-UniRule"/>
</dbReference>
<dbReference type="GO" id="GO:0003697">
    <property type="term" value="F:single-stranded DNA binding"/>
    <property type="evidence" value="ECO:0007669"/>
    <property type="project" value="UniProtKB-UniRule"/>
</dbReference>
<dbReference type="GO" id="GO:0006260">
    <property type="term" value="P:DNA replication"/>
    <property type="evidence" value="ECO:0007669"/>
    <property type="project" value="UniProtKB-UniRule"/>
</dbReference>
<dbReference type="GO" id="GO:0000731">
    <property type="term" value="P:DNA synthesis involved in DNA repair"/>
    <property type="evidence" value="ECO:0007669"/>
    <property type="project" value="TreeGrafter"/>
</dbReference>
<dbReference type="GO" id="GO:0006302">
    <property type="term" value="P:double-strand break repair"/>
    <property type="evidence" value="ECO:0007669"/>
    <property type="project" value="TreeGrafter"/>
</dbReference>
<dbReference type="GO" id="GO:0009432">
    <property type="term" value="P:SOS response"/>
    <property type="evidence" value="ECO:0007669"/>
    <property type="project" value="UniProtKB-UniRule"/>
</dbReference>
<dbReference type="Gene3D" id="3.40.50.300">
    <property type="entry name" value="P-loop containing nucleotide triphosphate hydrolases"/>
    <property type="match status" value="1"/>
</dbReference>
<dbReference type="Gene3D" id="1.20.1050.90">
    <property type="entry name" value="RecF/RecN/SMC, N-terminal domain"/>
    <property type="match status" value="1"/>
</dbReference>
<dbReference type="HAMAP" id="MF_00365">
    <property type="entry name" value="RecF"/>
    <property type="match status" value="1"/>
</dbReference>
<dbReference type="InterPro" id="IPR001238">
    <property type="entry name" value="DNA-binding_RecF"/>
</dbReference>
<dbReference type="InterPro" id="IPR018078">
    <property type="entry name" value="DNA-binding_RecF_CS"/>
</dbReference>
<dbReference type="InterPro" id="IPR027417">
    <property type="entry name" value="P-loop_NTPase"/>
</dbReference>
<dbReference type="InterPro" id="IPR003395">
    <property type="entry name" value="RecF/RecN/SMC_N"/>
</dbReference>
<dbReference type="InterPro" id="IPR042174">
    <property type="entry name" value="RecF_2"/>
</dbReference>
<dbReference type="NCBIfam" id="TIGR00611">
    <property type="entry name" value="recf"/>
    <property type="match status" value="1"/>
</dbReference>
<dbReference type="PANTHER" id="PTHR32182">
    <property type="entry name" value="DNA REPLICATION AND REPAIR PROTEIN RECF"/>
    <property type="match status" value="1"/>
</dbReference>
<dbReference type="PANTHER" id="PTHR32182:SF0">
    <property type="entry name" value="DNA REPLICATION AND REPAIR PROTEIN RECF"/>
    <property type="match status" value="1"/>
</dbReference>
<dbReference type="Pfam" id="PF02463">
    <property type="entry name" value="SMC_N"/>
    <property type="match status" value="1"/>
</dbReference>
<dbReference type="SUPFAM" id="SSF52540">
    <property type="entry name" value="P-loop containing nucleoside triphosphate hydrolases"/>
    <property type="match status" value="1"/>
</dbReference>
<dbReference type="PROSITE" id="PS00618">
    <property type="entry name" value="RECF_2"/>
    <property type="match status" value="1"/>
</dbReference>
<keyword id="KW-0067">ATP-binding</keyword>
<keyword id="KW-0963">Cytoplasm</keyword>
<keyword id="KW-0227">DNA damage</keyword>
<keyword id="KW-0234">DNA repair</keyword>
<keyword id="KW-0235">DNA replication</keyword>
<keyword id="KW-0238">DNA-binding</keyword>
<keyword id="KW-0547">Nucleotide-binding</keyword>
<keyword id="KW-1185">Reference proteome</keyword>
<keyword id="KW-0742">SOS response</keyword>
<gene>
    <name evidence="1" type="primary">recF</name>
    <name type="ordered locus">FTL_1352</name>
</gene>
<organism>
    <name type="scientific">Francisella tularensis subsp. holarctica (strain LVS)</name>
    <dbReference type="NCBI Taxonomy" id="376619"/>
    <lineage>
        <taxon>Bacteria</taxon>
        <taxon>Pseudomonadati</taxon>
        <taxon>Pseudomonadota</taxon>
        <taxon>Gammaproteobacteria</taxon>
        <taxon>Thiotrichales</taxon>
        <taxon>Francisellaceae</taxon>
        <taxon>Francisella</taxon>
    </lineage>
</organism>
<protein>
    <recommendedName>
        <fullName evidence="1">DNA replication and repair protein RecF</fullName>
    </recommendedName>
</protein>
<reference key="1">
    <citation type="submission" date="2006-03" db="EMBL/GenBank/DDBJ databases">
        <title>Complete genome sequence of Francisella tularensis LVS (Live Vaccine Strain).</title>
        <authorList>
            <person name="Chain P."/>
            <person name="Larimer F."/>
            <person name="Land M."/>
            <person name="Stilwagen S."/>
            <person name="Larsson P."/>
            <person name="Bearden S."/>
            <person name="Chu M."/>
            <person name="Oyston P."/>
            <person name="Forsman M."/>
            <person name="Andersson S."/>
            <person name="Lindler L."/>
            <person name="Titball R."/>
            <person name="Garcia E."/>
        </authorList>
    </citation>
    <scope>NUCLEOTIDE SEQUENCE [LARGE SCALE GENOMIC DNA]</scope>
    <source>
        <strain>LVS</strain>
    </source>
</reference>
<sequence>MYISNLRLQNFRNIPAKSFDFKNSINFIVGKNGSGKTSILESIYFLSHSRSFRSSQLNRIINHNADEFIIYTKAYNPDEITISLSRKKNSNNISKLNLEIQKNHTEITRNLPIQLINPESFNIINSGAQQRCKVIDWGAFYLDKTFLKIWQQTKFLVKQRNSALKQNYPYSYILSIDKKLCEFAEILDYKRQAYFTKLKPKIYEILSHFNPNLQLDIDYFRGWNLHKSLAQVLEESFNYDNKYKVTNHGPHKADIVLSVSHKPIQDIFSRGQQKLLICALKLAQGEIHNSENDNKCIYLIDDITSELDSIHTLTLFNYLKQLKSQVFITTTEKNKINEFIDTNSYILEI</sequence>